<organism>
    <name type="scientific">Limosilactobacillus reuteri (strain DSM 20016)</name>
    <name type="common">Lactobacillus reuteri</name>
    <dbReference type="NCBI Taxonomy" id="557436"/>
    <lineage>
        <taxon>Bacteria</taxon>
        <taxon>Bacillati</taxon>
        <taxon>Bacillota</taxon>
        <taxon>Bacilli</taxon>
        <taxon>Lactobacillales</taxon>
        <taxon>Lactobacillaceae</taxon>
        <taxon>Limosilactobacillus</taxon>
    </lineage>
</organism>
<proteinExistence type="inferred from homology"/>
<protein>
    <recommendedName>
        <fullName evidence="1">Recombination protein RecR</fullName>
    </recommendedName>
</protein>
<evidence type="ECO:0000255" key="1">
    <source>
        <dbReference type="HAMAP-Rule" id="MF_00017"/>
    </source>
</evidence>
<name>RECR_LIMRD</name>
<comment type="function">
    <text evidence="1">May play a role in DNA repair. It seems to be involved in an RecBC-independent recombinational process of DNA repair. It may act with RecF and RecO.</text>
</comment>
<comment type="similarity">
    <text evidence="1">Belongs to the RecR family.</text>
</comment>
<sequence length="200" mass="22089">MIQYPEPLAKLIESYTKLPGIGQKTATRLAFYTLSMQEDDVTNFAKSLLSAKRDLHNCSICGNITEDDPCPICRDKTRDHSQILVVEQSQDVMAMERMHEYHGLYHVLHGVISPVAGTGPEDINITSLLKRLKKDDEVKEIIIATNASSDGELTAGYLAKLIKPAGIKVTRLAHGLSVGADIDYADEMTLFKAVQGRTEM</sequence>
<dbReference type="EMBL" id="CP000705">
    <property type="protein sequence ID" value="ABQ82598.1"/>
    <property type="molecule type" value="Genomic_DNA"/>
</dbReference>
<dbReference type="SMR" id="A5VIC4"/>
<dbReference type="STRING" id="557436.Lreu_0328"/>
<dbReference type="KEGG" id="lre:Lreu_0328"/>
<dbReference type="PATRIC" id="fig|557436.17.peg.1883"/>
<dbReference type="eggNOG" id="COG0353">
    <property type="taxonomic scope" value="Bacteria"/>
</dbReference>
<dbReference type="HOGENOM" id="CLU_060739_1_0_9"/>
<dbReference type="Proteomes" id="UP000001991">
    <property type="component" value="Chromosome"/>
</dbReference>
<dbReference type="GO" id="GO:0003677">
    <property type="term" value="F:DNA binding"/>
    <property type="evidence" value="ECO:0007669"/>
    <property type="project" value="UniProtKB-UniRule"/>
</dbReference>
<dbReference type="GO" id="GO:0008270">
    <property type="term" value="F:zinc ion binding"/>
    <property type="evidence" value="ECO:0007669"/>
    <property type="project" value="UniProtKB-KW"/>
</dbReference>
<dbReference type="GO" id="GO:0006310">
    <property type="term" value="P:DNA recombination"/>
    <property type="evidence" value="ECO:0007669"/>
    <property type="project" value="UniProtKB-UniRule"/>
</dbReference>
<dbReference type="GO" id="GO:0006281">
    <property type="term" value="P:DNA repair"/>
    <property type="evidence" value="ECO:0007669"/>
    <property type="project" value="UniProtKB-UniRule"/>
</dbReference>
<dbReference type="CDD" id="cd01025">
    <property type="entry name" value="TOPRIM_recR"/>
    <property type="match status" value="1"/>
</dbReference>
<dbReference type="Gene3D" id="3.30.60.80">
    <property type="match status" value="1"/>
</dbReference>
<dbReference type="Gene3D" id="3.40.1360.10">
    <property type="match status" value="1"/>
</dbReference>
<dbReference type="Gene3D" id="6.10.250.240">
    <property type="match status" value="1"/>
</dbReference>
<dbReference type="Gene3D" id="1.10.8.420">
    <property type="entry name" value="RecR Domain 1"/>
    <property type="match status" value="1"/>
</dbReference>
<dbReference type="HAMAP" id="MF_00017">
    <property type="entry name" value="RecR"/>
    <property type="match status" value="1"/>
</dbReference>
<dbReference type="InterPro" id="IPR000093">
    <property type="entry name" value="DNA_Rcmb_RecR"/>
</dbReference>
<dbReference type="InterPro" id="IPR023627">
    <property type="entry name" value="Rcmb_RecR"/>
</dbReference>
<dbReference type="InterPro" id="IPR015967">
    <property type="entry name" value="Rcmb_RecR_Znf"/>
</dbReference>
<dbReference type="InterPro" id="IPR006171">
    <property type="entry name" value="TOPRIM_dom"/>
</dbReference>
<dbReference type="InterPro" id="IPR034137">
    <property type="entry name" value="TOPRIM_RecR"/>
</dbReference>
<dbReference type="NCBIfam" id="TIGR00615">
    <property type="entry name" value="recR"/>
    <property type="match status" value="1"/>
</dbReference>
<dbReference type="PANTHER" id="PTHR30446">
    <property type="entry name" value="RECOMBINATION PROTEIN RECR"/>
    <property type="match status" value="1"/>
</dbReference>
<dbReference type="PANTHER" id="PTHR30446:SF0">
    <property type="entry name" value="RECOMBINATION PROTEIN RECR"/>
    <property type="match status" value="1"/>
</dbReference>
<dbReference type="Pfam" id="PF21175">
    <property type="entry name" value="RecR_C"/>
    <property type="match status" value="1"/>
</dbReference>
<dbReference type="Pfam" id="PF21176">
    <property type="entry name" value="RecR_HhH"/>
    <property type="match status" value="1"/>
</dbReference>
<dbReference type="Pfam" id="PF02132">
    <property type="entry name" value="RecR_ZnF"/>
    <property type="match status" value="1"/>
</dbReference>
<dbReference type="Pfam" id="PF13662">
    <property type="entry name" value="Toprim_4"/>
    <property type="match status" value="1"/>
</dbReference>
<dbReference type="SMART" id="SM00493">
    <property type="entry name" value="TOPRIM"/>
    <property type="match status" value="1"/>
</dbReference>
<dbReference type="SUPFAM" id="SSF111304">
    <property type="entry name" value="Recombination protein RecR"/>
    <property type="match status" value="1"/>
</dbReference>
<dbReference type="PROSITE" id="PS01300">
    <property type="entry name" value="RECR"/>
    <property type="match status" value="1"/>
</dbReference>
<dbReference type="PROSITE" id="PS50880">
    <property type="entry name" value="TOPRIM"/>
    <property type="match status" value="1"/>
</dbReference>
<feature type="chain" id="PRO_0000322900" description="Recombination protein RecR">
    <location>
        <begin position="1"/>
        <end position="200"/>
    </location>
</feature>
<feature type="domain" description="Toprim" evidence="1">
    <location>
        <begin position="81"/>
        <end position="177"/>
    </location>
</feature>
<feature type="zinc finger region" description="C4-type" evidence="1">
    <location>
        <begin position="58"/>
        <end position="73"/>
    </location>
</feature>
<accession>A5VIC4</accession>
<keyword id="KW-0227">DNA damage</keyword>
<keyword id="KW-0233">DNA recombination</keyword>
<keyword id="KW-0234">DNA repair</keyword>
<keyword id="KW-0479">Metal-binding</keyword>
<keyword id="KW-1185">Reference proteome</keyword>
<keyword id="KW-0862">Zinc</keyword>
<keyword id="KW-0863">Zinc-finger</keyword>
<reference key="1">
    <citation type="journal article" date="2011" name="PLoS Genet.">
        <title>The evolution of host specialization in the vertebrate gut symbiont Lactobacillus reuteri.</title>
        <authorList>
            <person name="Frese S.A."/>
            <person name="Benson A.K."/>
            <person name="Tannock G.W."/>
            <person name="Loach D.M."/>
            <person name="Kim J."/>
            <person name="Zhang M."/>
            <person name="Oh P.L."/>
            <person name="Heng N.C."/>
            <person name="Patil P.B."/>
            <person name="Juge N."/>
            <person name="Mackenzie D.A."/>
            <person name="Pearson B.M."/>
            <person name="Lapidus A."/>
            <person name="Dalin E."/>
            <person name="Tice H."/>
            <person name="Goltsman E."/>
            <person name="Land M."/>
            <person name="Hauser L."/>
            <person name="Ivanova N."/>
            <person name="Kyrpides N.C."/>
            <person name="Walter J."/>
        </authorList>
    </citation>
    <scope>NUCLEOTIDE SEQUENCE [LARGE SCALE GENOMIC DNA]</scope>
    <source>
        <strain>DSM 20016</strain>
    </source>
</reference>
<gene>
    <name evidence="1" type="primary">recR</name>
    <name type="ordered locus">Lreu_0328</name>
</gene>